<comment type="function">
    <text evidence="1">ATP-dependent carboxylate-amine ligase which exhibits weak glutamate--cysteine ligase activity.</text>
</comment>
<comment type="catalytic activity">
    <reaction evidence="1">
        <text>L-cysteine + L-glutamate + ATP = gamma-L-glutamyl-L-cysteine + ADP + phosphate + H(+)</text>
        <dbReference type="Rhea" id="RHEA:13285"/>
        <dbReference type="ChEBI" id="CHEBI:15378"/>
        <dbReference type="ChEBI" id="CHEBI:29985"/>
        <dbReference type="ChEBI" id="CHEBI:30616"/>
        <dbReference type="ChEBI" id="CHEBI:35235"/>
        <dbReference type="ChEBI" id="CHEBI:43474"/>
        <dbReference type="ChEBI" id="CHEBI:58173"/>
        <dbReference type="ChEBI" id="CHEBI:456216"/>
        <dbReference type="EC" id="6.3.2.2"/>
    </reaction>
</comment>
<comment type="similarity">
    <text evidence="1">Belongs to the glutamate--cysteine ligase type 2 family. YbdK subfamily.</text>
</comment>
<organism>
    <name type="scientific">Burkholderia pseudomallei (strain 668)</name>
    <dbReference type="NCBI Taxonomy" id="320373"/>
    <lineage>
        <taxon>Bacteria</taxon>
        <taxon>Pseudomonadati</taxon>
        <taxon>Pseudomonadota</taxon>
        <taxon>Betaproteobacteria</taxon>
        <taxon>Burkholderiales</taxon>
        <taxon>Burkholderiaceae</taxon>
        <taxon>Burkholderia</taxon>
        <taxon>pseudomallei group</taxon>
    </lineage>
</organism>
<keyword id="KW-0067">ATP-binding</keyword>
<keyword id="KW-0436">Ligase</keyword>
<keyword id="KW-0547">Nucleotide-binding</keyword>
<sequence>MALETFVNSEPFTFGVELEIQIVNTHNYDLTKAASDLMRLIKDAKFPGNITPEITESMIELSTGICRTHDQALGELHAIRDTLVSAADQLNVGLCGGGTHAFQQWSERQIFDAPRFQYISELYGYLAKQFTVFGQHVHIGCPDADSALFLLHSMSRFIPHFIALSASSPYVQNVDTGFHSARLNSVFAFPLSGRAPFVLTWHGFEEYFTKMVNTGVVNSMKDFYWDIRPKPGYGTIEVRVMDTPLSVDRAAAIACYIQTLARYLLIDRPLKLSEDDYLVYTFNRFEACRFGLEGTCVNPQTGERRTIAEDILDTLDRIAPHAAALGSRAALDEIGALAKARVNDASWLRTIFKQEKSLNETVRQQCLRWRE</sequence>
<dbReference type="EC" id="6.3.2.2" evidence="1"/>
<dbReference type="EMBL" id="CP000570">
    <property type="protein sequence ID" value="ABN84252.1"/>
    <property type="molecule type" value="Genomic_DNA"/>
</dbReference>
<dbReference type="RefSeq" id="WP_004195787.1">
    <property type="nucleotide sequence ID" value="NC_009074.1"/>
</dbReference>
<dbReference type="SMR" id="A3N3Y5"/>
<dbReference type="KEGG" id="bpd:BURPS668_0001"/>
<dbReference type="HOGENOM" id="CLU_044848_1_1_4"/>
<dbReference type="GO" id="GO:0005524">
    <property type="term" value="F:ATP binding"/>
    <property type="evidence" value="ECO:0007669"/>
    <property type="project" value="UniProtKB-KW"/>
</dbReference>
<dbReference type="GO" id="GO:0004357">
    <property type="term" value="F:glutamate-cysteine ligase activity"/>
    <property type="evidence" value="ECO:0007669"/>
    <property type="project" value="UniProtKB-EC"/>
</dbReference>
<dbReference type="GO" id="GO:0042398">
    <property type="term" value="P:modified amino acid biosynthetic process"/>
    <property type="evidence" value="ECO:0007669"/>
    <property type="project" value="InterPro"/>
</dbReference>
<dbReference type="Gene3D" id="3.30.590.20">
    <property type="match status" value="1"/>
</dbReference>
<dbReference type="HAMAP" id="MF_01609">
    <property type="entry name" value="Glu_cys_ligase_2"/>
    <property type="match status" value="1"/>
</dbReference>
<dbReference type="InterPro" id="IPR050141">
    <property type="entry name" value="GCL_type2/YbdK_subfam"/>
</dbReference>
<dbReference type="InterPro" id="IPR006336">
    <property type="entry name" value="GCS2"/>
</dbReference>
<dbReference type="InterPro" id="IPR014746">
    <property type="entry name" value="Gln_synth/guanido_kin_cat_dom"/>
</dbReference>
<dbReference type="InterPro" id="IPR011793">
    <property type="entry name" value="YbdK"/>
</dbReference>
<dbReference type="NCBIfam" id="TIGR02050">
    <property type="entry name" value="gshA_cyan_rel"/>
    <property type="match status" value="1"/>
</dbReference>
<dbReference type="NCBIfam" id="NF010040">
    <property type="entry name" value="PRK13516.1"/>
    <property type="match status" value="1"/>
</dbReference>
<dbReference type="PANTHER" id="PTHR36510">
    <property type="entry name" value="GLUTAMATE--CYSTEINE LIGASE 2-RELATED"/>
    <property type="match status" value="1"/>
</dbReference>
<dbReference type="PANTHER" id="PTHR36510:SF1">
    <property type="entry name" value="GLUTAMATE--CYSTEINE LIGASE 2-RELATED"/>
    <property type="match status" value="1"/>
</dbReference>
<dbReference type="Pfam" id="PF04107">
    <property type="entry name" value="GCS2"/>
    <property type="match status" value="1"/>
</dbReference>
<dbReference type="SUPFAM" id="SSF55931">
    <property type="entry name" value="Glutamine synthetase/guanido kinase"/>
    <property type="match status" value="1"/>
</dbReference>
<gene>
    <name type="ordered locus">BURPS668_0001</name>
</gene>
<reference key="1">
    <citation type="journal article" date="2010" name="Genome Biol. Evol.">
        <title>Continuing evolution of Burkholderia mallei through genome reduction and large-scale rearrangements.</title>
        <authorList>
            <person name="Losada L."/>
            <person name="Ronning C.M."/>
            <person name="DeShazer D."/>
            <person name="Woods D."/>
            <person name="Fedorova N."/>
            <person name="Kim H.S."/>
            <person name="Shabalina S.A."/>
            <person name="Pearson T.R."/>
            <person name="Brinkac L."/>
            <person name="Tan P."/>
            <person name="Nandi T."/>
            <person name="Crabtree J."/>
            <person name="Badger J."/>
            <person name="Beckstrom-Sternberg S."/>
            <person name="Saqib M."/>
            <person name="Schutzer S.E."/>
            <person name="Keim P."/>
            <person name="Nierman W.C."/>
        </authorList>
    </citation>
    <scope>NUCLEOTIDE SEQUENCE [LARGE SCALE GENOMIC DNA]</scope>
    <source>
        <strain>668</strain>
    </source>
</reference>
<accession>A3N3Y5</accession>
<protein>
    <recommendedName>
        <fullName evidence="1">Putative glutamate--cysteine ligase 2</fullName>
        <ecNumber evidence="1">6.3.2.2</ecNumber>
    </recommendedName>
    <alternativeName>
        <fullName evidence="1">Gamma-glutamylcysteine synthetase 2</fullName>
        <shortName evidence="1">GCS 2</shortName>
        <shortName evidence="1">Gamma-GCS 2</shortName>
    </alternativeName>
</protein>
<feature type="chain" id="PRO_1000069430" description="Putative glutamate--cysteine ligase 2">
    <location>
        <begin position="1"/>
        <end position="371"/>
    </location>
</feature>
<name>GCS2_BURP6</name>
<proteinExistence type="inferred from homology"/>
<evidence type="ECO:0000255" key="1">
    <source>
        <dbReference type="HAMAP-Rule" id="MF_01609"/>
    </source>
</evidence>